<dbReference type="EC" id="7.6.2.1" evidence="18"/>
<dbReference type="EMBL" id="Z38060">
    <property type="protein sequence ID" value="CAA86174.1"/>
    <property type="molecule type" value="Genomic_DNA"/>
</dbReference>
<dbReference type="EMBL" id="BK006942">
    <property type="protein sequence ID" value="DAA08499.1"/>
    <property type="molecule type" value="Genomic_DNA"/>
</dbReference>
<dbReference type="PIR" id="S48431">
    <property type="entry name" value="S48431"/>
</dbReference>
<dbReference type="RefSeq" id="NP_012216.1">
    <property type="nucleotide sequence ID" value="NM_001179398.1"/>
</dbReference>
<dbReference type="PDB" id="7RD6">
    <property type="method" value="EM"/>
    <property type="resolution" value="3.25 A"/>
    <property type="chains" value="A=1-1151"/>
</dbReference>
<dbReference type="PDB" id="7RD7">
    <property type="method" value="EM"/>
    <property type="resolution" value="3.08 A"/>
    <property type="chains" value="A=1-1151"/>
</dbReference>
<dbReference type="PDB" id="7RD8">
    <property type="method" value="EM"/>
    <property type="resolution" value="5.64 A"/>
    <property type="chains" value="A=1-1151"/>
</dbReference>
<dbReference type="PDBsum" id="7RD6"/>
<dbReference type="PDBsum" id="7RD7"/>
<dbReference type="PDBsum" id="7RD8"/>
<dbReference type="EMDB" id="EMD-24413"/>
<dbReference type="EMDB" id="EMD-24414"/>
<dbReference type="EMDB" id="EMD-24415"/>
<dbReference type="SMR" id="P40527"/>
<dbReference type="BioGRID" id="34942">
    <property type="interactions" value="506"/>
</dbReference>
<dbReference type="ComplexPortal" id="CPX-1028">
    <property type="entry name" value="NEO1-MON2-ARL1-DOP1 membrane remodeling complex"/>
</dbReference>
<dbReference type="DIP" id="DIP-2548N"/>
<dbReference type="FunCoup" id="P40527">
    <property type="interactions" value="452"/>
</dbReference>
<dbReference type="IntAct" id="P40527">
    <property type="interactions" value="7"/>
</dbReference>
<dbReference type="MINT" id="P40527"/>
<dbReference type="STRING" id="4932.YIL048W"/>
<dbReference type="TCDB" id="3.A.3.8.18">
    <property type="family name" value="the p-type atpase (p-atpase) superfamily"/>
</dbReference>
<dbReference type="iPTMnet" id="P40527"/>
<dbReference type="PaxDb" id="4932-YIL048W"/>
<dbReference type="PeptideAtlas" id="P40527"/>
<dbReference type="EnsemblFungi" id="YIL048W_mRNA">
    <property type="protein sequence ID" value="YIL048W"/>
    <property type="gene ID" value="YIL048W"/>
</dbReference>
<dbReference type="GeneID" id="854763"/>
<dbReference type="KEGG" id="sce:YIL048W"/>
<dbReference type="AGR" id="SGD:S000001310"/>
<dbReference type="SGD" id="S000001310">
    <property type="gene designation" value="NEO1"/>
</dbReference>
<dbReference type="VEuPathDB" id="FungiDB:YIL048W"/>
<dbReference type="eggNOG" id="KOG0210">
    <property type="taxonomic scope" value="Eukaryota"/>
</dbReference>
<dbReference type="GeneTree" id="ENSGT00940000168130"/>
<dbReference type="HOGENOM" id="CLU_000846_6_0_1"/>
<dbReference type="InParanoid" id="P40527"/>
<dbReference type="OMA" id="IAITTWH"/>
<dbReference type="OrthoDB" id="377733at2759"/>
<dbReference type="BioCyc" id="YEAST:G3O-31319-MONOMER"/>
<dbReference type="Reactome" id="R-SCE-936837">
    <property type="pathway name" value="Ion transport by P-type ATPases"/>
</dbReference>
<dbReference type="BioGRID-ORCS" id="854763">
    <property type="hits" value="0 hits in 10 CRISPR screens"/>
</dbReference>
<dbReference type="PRO" id="PR:P40527"/>
<dbReference type="Proteomes" id="UP000002311">
    <property type="component" value="Chromosome IX"/>
</dbReference>
<dbReference type="RNAct" id="P40527">
    <property type="molecule type" value="protein"/>
</dbReference>
<dbReference type="GO" id="GO:0005768">
    <property type="term" value="C:endosome"/>
    <property type="evidence" value="ECO:0000314"/>
    <property type="project" value="SGD"/>
</dbReference>
<dbReference type="GO" id="GO:0010008">
    <property type="term" value="C:endosome membrane"/>
    <property type="evidence" value="ECO:0000303"/>
    <property type="project" value="ComplexPortal"/>
</dbReference>
<dbReference type="GO" id="GO:0005794">
    <property type="term" value="C:Golgi apparatus"/>
    <property type="evidence" value="ECO:0000314"/>
    <property type="project" value="SGD"/>
</dbReference>
<dbReference type="GO" id="GO:0000139">
    <property type="term" value="C:Golgi membrane"/>
    <property type="evidence" value="ECO:0000314"/>
    <property type="project" value="SGD"/>
</dbReference>
<dbReference type="GO" id="GO:0005770">
    <property type="term" value="C:late endosome"/>
    <property type="evidence" value="ECO:0000314"/>
    <property type="project" value="SGD"/>
</dbReference>
<dbReference type="GO" id="GO:0005886">
    <property type="term" value="C:plasma membrane"/>
    <property type="evidence" value="ECO:0000315"/>
    <property type="project" value="SGD"/>
</dbReference>
<dbReference type="GO" id="GO:0005802">
    <property type="term" value="C:trans-Golgi network"/>
    <property type="evidence" value="ECO:0000314"/>
    <property type="project" value="SGD"/>
</dbReference>
<dbReference type="GO" id="GO:0005524">
    <property type="term" value="F:ATP binding"/>
    <property type="evidence" value="ECO:0007669"/>
    <property type="project" value="UniProtKB-KW"/>
</dbReference>
<dbReference type="GO" id="GO:0016887">
    <property type="term" value="F:ATP hydrolysis activity"/>
    <property type="evidence" value="ECO:0007669"/>
    <property type="project" value="InterPro"/>
</dbReference>
<dbReference type="GO" id="GO:0140326">
    <property type="term" value="F:ATPase-coupled intramembrane lipid transporter activity"/>
    <property type="evidence" value="ECO:0000250"/>
    <property type="project" value="SGD"/>
</dbReference>
<dbReference type="GO" id="GO:0180013">
    <property type="term" value="F:lysophosphatidylserine flippase activity"/>
    <property type="evidence" value="ECO:0000314"/>
    <property type="project" value="UniProtKB"/>
</dbReference>
<dbReference type="GO" id="GO:0000287">
    <property type="term" value="F:magnesium ion binding"/>
    <property type="evidence" value="ECO:0007669"/>
    <property type="project" value="InterPro"/>
</dbReference>
<dbReference type="GO" id="GO:0090555">
    <property type="term" value="F:phosphatidylethanolamine flippase activity"/>
    <property type="evidence" value="ECO:0000314"/>
    <property type="project" value="UniProtKB"/>
</dbReference>
<dbReference type="GO" id="GO:0140346">
    <property type="term" value="F:phosphatidylserine flippase activity"/>
    <property type="evidence" value="ECO:0000314"/>
    <property type="project" value="UniProtKB"/>
</dbReference>
<dbReference type="GO" id="GO:0090556">
    <property type="term" value="F:phosphatidylserine floppase activity"/>
    <property type="evidence" value="ECO:0007669"/>
    <property type="project" value="RHEA"/>
</dbReference>
<dbReference type="GO" id="GO:0006897">
    <property type="term" value="P:endocytosis"/>
    <property type="evidence" value="ECO:0000315"/>
    <property type="project" value="SGD"/>
</dbReference>
<dbReference type="GO" id="GO:0045332">
    <property type="term" value="P:phospholipid translocation"/>
    <property type="evidence" value="ECO:0000314"/>
    <property type="project" value="UniProtKB"/>
</dbReference>
<dbReference type="GO" id="GO:0015031">
    <property type="term" value="P:protein transport"/>
    <property type="evidence" value="ECO:0007669"/>
    <property type="project" value="UniProtKB-KW"/>
</dbReference>
<dbReference type="GO" id="GO:0006890">
    <property type="term" value="P:retrograde vesicle-mediated transport, Golgi to endoplasmic reticulum"/>
    <property type="evidence" value="ECO:0000315"/>
    <property type="project" value="SGD"/>
</dbReference>
<dbReference type="GO" id="GO:0098629">
    <property type="term" value="P:trans-Golgi network membrane organization"/>
    <property type="evidence" value="ECO:0000303"/>
    <property type="project" value="ComplexPortal"/>
</dbReference>
<dbReference type="GO" id="GO:0007033">
    <property type="term" value="P:vacuole organization"/>
    <property type="evidence" value="ECO:0000315"/>
    <property type="project" value="SGD"/>
</dbReference>
<dbReference type="CDD" id="cd07541">
    <property type="entry name" value="P-type_ATPase_APLT_Neo1-like"/>
    <property type="match status" value="1"/>
</dbReference>
<dbReference type="FunFam" id="3.40.1110.10:FF:000085">
    <property type="entry name" value="Phospholipid-transporting ATPase"/>
    <property type="match status" value="1"/>
</dbReference>
<dbReference type="FunFam" id="3.40.50.1000:FF:000009">
    <property type="entry name" value="Phospholipid-transporting ATPase"/>
    <property type="match status" value="1"/>
</dbReference>
<dbReference type="Gene3D" id="3.40.1110.10">
    <property type="entry name" value="Calcium-transporting ATPase, cytoplasmic domain N"/>
    <property type="match status" value="1"/>
</dbReference>
<dbReference type="Gene3D" id="2.70.150.10">
    <property type="entry name" value="Calcium-transporting ATPase, cytoplasmic transduction domain A"/>
    <property type="match status" value="1"/>
</dbReference>
<dbReference type="Gene3D" id="3.40.50.1000">
    <property type="entry name" value="HAD superfamily/HAD-like"/>
    <property type="match status" value="1"/>
</dbReference>
<dbReference type="InterPro" id="IPR023299">
    <property type="entry name" value="ATPase_P-typ_cyto_dom_N"/>
</dbReference>
<dbReference type="InterPro" id="IPR018303">
    <property type="entry name" value="ATPase_P-typ_P_site"/>
</dbReference>
<dbReference type="InterPro" id="IPR023298">
    <property type="entry name" value="ATPase_P-typ_TM_dom_sf"/>
</dbReference>
<dbReference type="InterPro" id="IPR008250">
    <property type="entry name" value="ATPase_P-typ_transduc_dom_A_sf"/>
</dbReference>
<dbReference type="InterPro" id="IPR036412">
    <property type="entry name" value="HAD-like_sf"/>
</dbReference>
<dbReference type="InterPro" id="IPR023214">
    <property type="entry name" value="HAD_sf"/>
</dbReference>
<dbReference type="InterPro" id="IPR006539">
    <property type="entry name" value="P-type_ATPase_IV"/>
</dbReference>
<dbReference type="InterPro" id="IPR032631">
    <property type="entry name" value="P-type_ATPase_N"/>
</dbReference>
<dbReference type="InterPro" id="IPR001757">
    <property type="entry name" value="P_typ_ATPase"/>
</dbReference>
<dbReference type="InterPro" id="IPR032630">
    <property type="entry name" value="P_typ_ATPase_c"/>
</dbReference>
<dbReference type="InterPro" id="IPR044492">
    <property type="entry name" value="P_typ_ATPase_HD_dom"/>
</dbReference>
<dbReference type="NCBIfam" id="TIGR01652">
    <property type="entry name" value="ATPase-Plipid"/>
    <property type="match status" value="1"/>
</dbReference>
<dbReference type="NCBIfam" id="TIGR01494">
    <property type="entry name" value="ATPase_P-type"/>
    <property type="match status" value="3"/>
</dbReference>
<dbReference type="PANTHER" id="PTHR24092:SF5">
    <property type="entry name" value="PHOSPHOLIPID-TRANSPORTING ATPASE"/>
    <property type="match status" value="1"/>
</dbReference>
<dbReference type="PANTHER" id="PTHR24092">
    <property type="entry name" value="PROBABLE PHOSPHOLIPID-TRANSPORTING ATPASE"/>
    <property type="match status" value="1"/>
</dbReference>
<dbReference type="Pfam" id="PF13246">
    <property type="entry name" value="Cation_ATPase"/>
    <property type="match status" value="1"/>
</dbReference>
<dbReference type="Pfam" id="PF00122">
    <property type="entry name" value="E1-E2_ATPase"/>
    <property type="match status" value="1"/>
</dbReference>
<dbReference type="Pfam" id="PF16212">
    <property type="entry name" value="PhoLip_ATPase_C"/>
    <property type="match status" value="1"/>
</dbReference>
<dbReference type="Pfam" id="PF16209">
    <property type="entry name" value="PhoLip_ATPase_N"/>
    <property type="match status" value="1"/>
</dbReference>
<dbReference type="PRINTS" id="PR00119">
    <property type="entry name" value="CATATPASE"/>
</dbReference>
<dbReference type="SFLD" id="SFLDS00003">
    <property type="entry name" value="Haloacid_Dehalogenase"/>
    <property type="match status" value="1"/>
</dbReference>
<dbReference type="SFLD" id="SFLDF00027">
    <property type="entry name" value="p-type_atpase"/>
    <property type="match status" value="1"/>
</dbReference>
<dbReference type="SUPFAM" id="SSF81653">
    <property type="entry name" value="Calcium ATPase, transduction domain A"/>
    <property type="match status" value="1"/>
</dbReference>
<dbReference type="SUPFAM" id="SSF81665">
    <property type="entry name" value="Calcium ATPase, transmembrane domain M"/>
    <property type="match status" value="1"/>
</dbReference>
<dbReference type="SUPFAM" id="SSF56784">
    <property type="entry name" value="HAD-like"/>
    <property type="match status" value="1"/>
</dbReference>
<dbReference type="SUPFAM" id="SSF81660">
    <property type="entry name" value="Metal cation-transporting ATPase, ATP-binding domain N"/>
    <property type="match status" value="1"/>
</dbReference>
<dbReference type="PROSITE" id="PS00154">
    <property type="entry name" value="ATPASE_E1_E2"/>
    <property type="match status" value="1"/>
</dbReference>
<feature type="chain" id="PRO_0000046236" description="Phospholipid-transporting ATPase NEO1">
    <location>
        <begin position="1"/>
        <end position="1151"/>
    </location>
</feature>
<feature type="topological domain" description="Extracellular" evidence="6">
    <location>
        <begin position="1"/>
        <end position="184"/>
    </location>
</feature>
<feature type="transmembrane region" description="Helical" evidence="6">
    <location>
        <begin position="185"/>
        <end position="205"/>
    </location>
</feature>
<feature type="topological domain" description="Cytoplasmic" evidence="6">
    <location>
        <begin position="206"/>
        <end position="209"/>
    </location>
</feature>
<feature type="transmembrane region" description="Helical" evidence="6">
    <location>
        <begin position="210"/>
        <end position="230"/>
    </location>
</feature>
<feature type="topological domain" description="Extracellular" evidence="6">
    <location>
        <begin position="231"/>
        <end position="367"/>
    </location>
</feature>
<feature type="transmembrane region" description="Helical" evidence="6">
    <location>
        <begin position="368"/>
        <end position="388"/>
    </location>
</feature>
<feature type="topological domain" description="Cytoplasmic" evidence="6">
    <location>
        <begin position="389"/>
        <end position="416"/>
    </location>
</feature>
<feature type="transmembrane region" description="Helical" evidence="6">
    <location>
        <begin position="417"/>
        <end position="437"/>
    </location>
</feature>
<feature type="topological domain" description="Extracellular" evidence="6">
    <location>
        <position position="438"/>
    </location>
</feature>
<feature type="transmembrane region" description="Helical" evidence="6">
    <location>
        <begin position="439"/>
        <end position="459"/>
    </location>
</feature>
<feature type="topological domain" description="Cytoplasmic" evidence="6">
    <location>
        <begin position="460"/>
        <end position="947"/>
    </location>
</feature>
<feature type="transmembrane region" description="Helical" evidence="6">
    <location>
        <begin position="948"/>
        <end position="968"/>
    </location>
</feature>
<feature type="topological domain" description="Extracellular" evidence="6">
    <location>
        <begin position="969"/>
        <end position="970"/>
    </location>
</feature>
<feature type="transmembrane region" description="Helical" evidence="6">
    <location>
        <begin position="971"/>
        <end position="991"/>
    </location>
</feature>
<feature type="topological domain" description="Cytoplasmic" evidence="6">
    <location>
        <begin position="992"/>
        <end position="1020"/>
    </location>
</feature>
<feature type="transmembrane region" description="Helical" evidence="6">
    <location>
        <begin position="1021"/>
        <end position="1041"/>
    </location>
</feature>
<feature type="topological domain" description="Extracellular" evidence="6">
    <location>
        <begin position="1042"/>
        <end position="1052"/>
    </location>
</feature>
<feature type="transmembrane region" description="Helical" evidence="6">
    <location>
        <begin position="1053"/>
        <end position="1073"/>
    </location>
</feature>
<feature type="topological domain" description="Cytoplasmic" evidence="6">
    <location>
        <begin position="1074"/>
        <end position="1078"/>
    </location>
</feature>
<feature type="transmembrane region" description="Helical" evidence="6">
    <location>
        <begin position="1079"/>
        <end position="1099"/>
    </location>
</feature>
<feature type="topological domain" description="Extracellular" evidence="6">
    <location>
        <begin position="1100"/>
        <end position="1109"/>
    </location>
</feature>
<feature type="transmembrane region" description="Helical" evidence="6">
    <location>
        <begin position="1110"/>
        <end position="1130"/>
    </location>
</feature>
<feature type="topological domain" description="Cytoplasmic" evidence="6">
    <location>
        <begin position="1131"/>
        <end position="1151"/>
    </location>
</feature>
<feature type="region of interest" description="Disordered" evidence="7">
    <location>
        <begin position="1"/>
        <end position="21"/>
    </location>
</feature>
<feature type="region of interest" description="Required for endosome-to-Golgi sorting" evidence="12">
    <location>
        <begin position="51"/>
        <end position="104"/>
    </location>
</feature>
<feature type="region of interest" description="Disordered" evidence="7">
    <location>
        <begin position="73"/>
        <end position="95"/>
    </location>
</feature>
<feature type="region of interest" description="Required for endosomal targeting">
    <location>
        <begin position="1131"/>
        <end position="1151"/>
    </location>
</feature>
<feature type="compositionally biased region" description="Polar residues" evidence="7">
    <location>
        <begin position="12"/>
        <end position="21"/>
    </location>
</feature>
<feature type="active site" description="4-aspartylphosphate intermediate" evidence="17">
    <location>
        <position position="503"/>
    </location>
</feature>
<feature type="binding site" evidence="5">
    <location>
        <position position="503"/>
    </location>
    <ligand>
        <name>ATP</name>
        <dbReference type="ChEBI" id="CHEBI:30616"/>
    </ligand>
</feature>
<feature type="binding site" evidence="5">
    <location>
        <position position="503"/>
    </location>
    <ligand>
        <name>Mg(2+)</name>
        <dbReference type="ChEBI" id="CHEBI:18420"/>
    </ligand>
</feature>
<feature type="binding site" evidence="5">
    <location>
        <position position="504"/>
    </location>
    <ligand>
        <name>ATP</name>
        <dbReference type="ChEBI" id="CHEBI:30616"/>
    </ligand>
</feature>
<feature type="binding site" evidence="15 22">
    <location>
        <position position="505"/>
    </location>
    <ligand>
        <name>ATP</name>
        <dbReference type="ChEBI" id="CHEBI:30616"/>
    </ligand>
</feature>
<feature type="binding site" evidence="5">
    <location>
        <position position="505"/>
    </location>
    <ligand>
        <name>Mg(2+)</name>
        <dbReference type="ChEBI" id="CHEBI:18420"/>
    </ligand>
</feature>
<feature type="binding site" evidence="1">
    <location>
        <position position="597"/>
    </location>
    <ligand>
        <name>ATP</name>
        <dbReference type="ChEBI" id="CHEBI:30616"/>
    </ligand>
</feature>
<feature type="binding site" evidence="5">
    <location>
        <position position="640"/>
    </location>
    <ligand>
        <name>ATP</name>
        <dbReference type="ChEBI" id="CHEBI:30616"/>
    </ligand>
</feature>
<feature type="binding site" evidence="2">
    <location>
        <position position="642"/>
    </location>
    <ligand>
        <name>ATP</name>
        <dbReference type="ChEBI" id="CHEBI:30616"/>
    </ligand>
</feature>
<feature type="binding site" evidence="15 22">
    <location>
        <position position="645"/>
    </location>
    <ligand>
        <name>ATP</name>
        <dbReference type="ChEBI" id="CHEBI:30616"/>
    </ligand>
</feature>
<feature type="binding site" evidence="1">
    <location>
        <position position="664"/>
    </location>
    <ligand>
        <name>ATP</name>
        <dbReference type="ChEBI" id="CHEBI:30616"/>
    </ligand>
</feature>
<feature type="binding site" evidence="1">
    <location>
        <position position="693"/>
    </location>
    <ligand>
        <name>ATP</name>
        <dbReference type="ChEBI" id="CHEBI:30616"/>
    </ligand>
</feature>
<feature type="binding site" evidence="3">
    <location>
        <position position="694"/>
    </location>
    <ligand>
        <name>ATP</name>
        <dbReference type="ChEBI" id="CHEBI:30616"/>
    </ligand>
</feature>
<feature type="binding site" evidence="1">
    <location>
        <position position="774"/>
    </location>
    <ligand>
        <name>ATP</name>
        <dbReference type="ChEBI" id="CHEBI:30616"/>
    </ligand>
</feature>
<feature type="binding site" evidence="1">
    <location>
        <position position="775"/>
    </location>
    <ligand>
        <name>ATP</name>
        <dbReference type="ChEBI" id="CHEBI:30616"/>
    </ligand>
</feature>
<feature type="binding site" evidence="1">
    <location>
        <position position="776"/>
    </location>
    <ligand>
        <name>ATP</name>
        <dbReference type="ChEBI" id="CHEBI:30616"/>
    </ligand>
</feature>
<feature type="binding site" evidence="1">
    <location>
        <position position="856"/>
    </location>
    <ligand>
        <name>ATP</name>
        <dbReference type="ChEBI" id="CHEBI:30616"/>
    </ligand>
</feature>
<feature type="binding site" evidence="1">
    <location>
        <position position="862"/>
    </location>
    <ligand>
        <name>ATP</name>
        <dbReference type="ChEBI" id="CHEBI:30616"/>
    </ligand>
</feature>
<feature type="binding site" evidence="5">
    <location>
        <position position="882"/>
    </location>
    <ligand>
        <name>Mg(2+)</name>
        <dbReference type="ChEBI" id="CHEBI:18420"/>
    </ligand>
</feature>
<feature type="binding site" evidence="5">
    <location>
        <position position="885"/>
    </location>
    <ligand>
        <name>ATP</name>
        <dbReference type="ChEBI" id="CHEBI:30616"/>
    </ligand>
</feature>
<feature type="binding site" evidence="1">
    <location>
        <position position="886"/>
    </location>
    <ligand>
        <name>ATP</name>
        <dbReference type="ChEBI" id="CHEBI:30616"/>
    </ligand>
</feature>
<feature type="binding site" evidence="4">
    <location>
        <position position="886"/>
    </location>
    <ligand>
        <name>Mg(2+)</name>
        <dbReference type="ChEBI" id="CHEBI:18420"/>
    </ligand>
</feature>
<feature type="modified residue" description="Phosphoserine" evidence="23 24 25">
    <location>
        <position position="102"/>
    </location>
</feature>
<feature type="modified residue" description="Phosphoserine" evidence="24">
    <location>
        <position position="551"/>
    </location>
</feature>
<feature type="mutagenesis site" description="Sensitive to neomycin and trifluoperazine; sensitivity is suppressed by knockout of ANY1." evidence="12">
    <original>FEM</original>
    <variation>AAA</variation>
    <location>
        <begin position="65"/>
        <end position="67"/>
    </location>
</feature>
<feature type="mutagenesis site" description="Sensitive to duramycin (phosphatidylethanolamine-binding cytotoxin). Localization to the Golgi apparatus appears normal." evidence="15">
    <original>Q</original>
    <variation>A</variation>
    <location>
        <position position="193"/>
    </location>
</feature>
<feature type="mutagenesis site" description="Sensitive to duramycin (phosphatidylethanolamine-binding cytotoxin) and papuamide A (phosphatidylserine-binding cytotoxin). Localization to the Golgi apparatus appears normal." evidence="14 15">
    <original>Q</original>
    <variation>G</variation>
    <location>
        <position position="209"/>
    </location>
</feature>
<feature type="mutagenesis site" description="Sensitive to duramycin (phosphatidylethanolamine-binding cytotoxin)." evidence="15">
    <original>S</original>
    <variation>L</variation>
    <location>
        <position position="221"/>
    </location>
</feature>
<feature type="mutagenesis site" description="May enhance substrate loading. Decreases cell population growth; when associated with V-228 and D-237." evidence="14">
    <original>Y</original>
    <variation>S</variation>
    <variation>A</variation>
    <location>
        <position position="222"/>
    </location>
</feature>
<feature type="mutagenesis site" description="Does not appear to affect its physical interaction with ANY1. Increases localization to late Golgi compartments. Decreases cell population growth; when associated with V-228 and D-237." evidence="14">
    <original>Y</original>
    <variation>S</variation>
    <location>
        <position position="222"/>
    </location>
</feature>
<feature type="mutagenesis site" description="Decreases cell population growth; when associated with S-222 and D-237." evidence="14">
    <original>F</original>
    <variation>V</variation>
    <location>
        <position position="228"/>
    </location>
</feature>
<feature type="mutagenesis site" description="Sensitive to duramycin (phosphatidylethanolamine-binding cytotoxin) and papuamide A (phosphatidylserine-binding cytotoxin). Localization to the Golgi apparatus appears normal. Decreases cell population growth; when associated with S-222 and V-228." evidence="14 15">
    <original>E</original>
    <variation>D</variation>
    <location>
        <position position="237"/>
    </location>
</feature>
<feature type="mutagenesis site" description="Sensitive to duramycin (phosphatidylethanolamine-binding cytotoxin)." evidence="15">
    <original>R</original>
    <variation>A</variation>
    <variation>L</variation>
    <location>
        <position position="247"/>
    </location>
</feature>
<feature type="mutagenesis site" description="Sensitive to duramycin (phosphatidylethanolamine-binding cytotoxin)." evidence="14 15">
    <original>S</original>
    <variation>A</variation>
    <variation>Q</variation>
    <location>
        <position position="452"/>
    </location>
</feature>
<feature type="mutagenesis site" description="Sensitive to papuamide A (phosphatidylserine-binding cytotoxin). Localization to the Golgi apparatus appears normal." evidence="14 15">
    <original>S</original>
    <variation>Q</variation>
    <location>
        <position position="452"/>
    </location>
</feature>
<feature type="mutagenesis site" description="Sensitive to papuamide A." evidence="15">
    <original>T</original>
    <variation>S</variation>
    <location>
        <position position="453"/>
    </location>
</feature>
<feature type="mutagenesis site" description="No apparent effect on viability. Sensitive to duramycin (phosphatidylethanolamine-binding cytotoxin) and papuamide A (phosphatidylserine-binding cytotoxin). Localization to the Golgi apparatus appears normal." evidence="15">
    <original>P</original>
    <variation>A</variation>
    <location>
        <position position="456"/>
    </location>
</feature>
<feature type="mutagenesis site" description="Inviable." evidence="15">
    <original>P</original>
    <variation>G</variation>
    <location>
        <position position="456"/>
    </location>
</feature>
<feature type="mutagenesis site" description="Sensitive to duramycin (phosphatidylethanolamine-binding cytotoxin)." evidence="14">
    <original>V</original>
    <variation>A</variation>
    <variation>E</variation>
    <variation>F</variation>
    <location>
        <position position="457"/>
    </location>
</feature>
<feature type="mutagenesis site" description="Sensitive to duramycin (phosphatidylethanolamine-binding cytotoxin) and papuamide A (phosphatidylserine-binding cytotoxin)." evidence="15">
    <original>S</original>
    <variation>A</variation>
    <variation>W</variation>
    <location>
        <position position="488"/>
    </location>
</feature>
<feature type="mutagenesis site" description="Localization to the Golgi apparatus appears normal." evidence="15">
    <original>S</original>
    <variation>A</variation>
    <location>
        <position position="488"/>
    </location>
</feature>
<feature type="mutagenesis site" description="Inviable." evidence="11 14">
    <original>D</original>
    <variation>N</variation>
    <location>
        <position position="503"/>
    </location>
</feature>
<feature type="strand" evidence="27">
    <location>
        <begin position="155"/>
        <end position="157"/>
    </location>
</feature>
<feature type="helix" evidence="27">
    <location>
        <begin position="162"/>
        <end position="166"/>
    </location>
</feature>
<feature type="strand" evidence="27">
    <location>
        <begin position="167"/>
        <end position="170"/>
    </location>
</feature>
<feature type="helix" evidence="27">
    <location>
        <begin position="186"/>
        <end position="193"/>
    </location>
</feature>
<feature type="strand" evidence="27">
    <location>
        <begin position="194"/>
        <end position="196"/>
    </location>
</feature>
<feature type="helix" evidence="27">
    <location>
        <begin position="197"/>
        <end position="208"/>
    </location>
</feature>
<feature type="helix" evidence="26">
    <location>
        <begin position="212"/>
        <end position="214"/>
    </location>
</feature>
<feature type="turn" evidence="27">
    <location>
        <begin position="219"/>
        <end position="222"/>
    </location>
</feature>
<feature type="helix" evidence="27">
    <location>
        <begin position="224"/>
        <end position="249"/>
    </location>
</feature>
<feature type="strand" evidence="27">
    <location>
        <begin position="255"/>
        <end position="258"/>
    </location>
</feature>
<feature type="turn" evidence="27">
    <location>
        <begin position="259"/>
        <end position="261"/>
    </location>
</feature>
<feature type="strand" evidence="27">
    <location>
        <begin position="263"/>
        <end position="266"/>
    </location>
</feature>
<feature type="turn" evidence="27">
    <location>
        <begin position="267"/>
        <end position="269"/>
    </location>
</feature>
<feature type="strand" evidence="27">
    <location>
        <begin position="275"/>
        <end position="279"/>
    </location>
</feature>
<feature type="strand" evidence="27">
    <location>
        <begin position="286"/>
        <end position="297"/>
    </location>
</feature>
<feature type="strand" evidence="27">
    <location>
        <begin position="299"/>
        <end position="303"/>
    </location>
</feature>
<feature type="turn" evidence="27">
    <location>
        <begin position="305"/>
        <end position="307"/>
    </location>
</feature>
<feature type="strand" evidence="27">
    <location>
        <begin position="312"/>
        <end position="317"/>
    </location>
</feature>
<feature type="turn" evidence="27">
    <location>
        <begin position="320"/>
        <end position="322"/>
    </location>
</feature>
<feature type="strand" evidence="27">
    <location>
        <begin position="335"/>
        <end position="338"/>
    </location>
</feature>
<feature type="strand" evidence="27">
    <location>
        <begin position="350"/>
        <end position="354"/>
    </location>
</feature>
<feature type="turn" evidence="27">
    <location>
        <begin position="355"/>
        <end position="357"/>
    </location>
</feature>
<feature type="strand" evidence="27">
    <location>
        <begin position="358"/>
        <end position="362"/>
    </location>
</feature>
<feature type="helix" evidence="27">
    <location>
        <begin position="364"/>
        <end position="366"/>
    </location>
</feature>
<feature type="strand" evidence="27">
    <location>
        <begin position="376"/>
        <end position="386"/>
    </location>
</feature>
<feature type="helix" evidence="27">
    <location>
        <begin position="392"/>
        <end position="395"/>
    </location>
</feature>
<feature type="helix" evidence="27">
    <location>
        <begin position="406"/>
        <end position="433"/>
    </location>
</feature>
<feature type="helix" evidence="27">
    <location>
        <begin position="440"/>
        <end position="451"/>
    </location>
</feature>
<feature type="helix" evidence="27">
    <location>
        <begin position="455"/>
        <end position="474"/>
    </location>
</feature>
<feature type="strand" evidence="27">
    <location>
        <begin position="478"/>
        <end position="480"/>
    </location>
</feature>
<feature type="strand" evidence="27">
    <location>
        <begin position="484"/>
        <end position="486"/>
    </location>
</feature>
<feature type="helix" evidence="27">
    <location>
        <begin position="493"/>
        <end position="495"/>
    </location>
</feature>
<feature type="strand" evidence="27">
    <location>
        <begin position="499"/>
        <end position="502"/>
    </location>
</feature>
<feature type="turn" evidence="27">
    <location>
        <begin position="505"/>
        <end position="508"/>
    </location>
</feature>
<feature type="strand" evidence="27">
    <location>
        <begin position="509"/>
        <end position="520"/>
    </location>
</feature>
<feature type="strand" evidence="27">
    <location>
        <begin position="523"/>
        <end position="529"/>
    </location>
</feature>
<feature type="helix" evidence="27">
    <location>
        <begin position="531"/>
        <end position="537"/>
    </location>
</feature>
<feature type="helix" evidence="26">
    <location>
        <begin position="538"/>
        <end position="540"/>
    </location>
</feature>
<feature type="helix" evidence="27">
    <location>
        <begin position="561"/>
        <end position="575"/>
    </location>
</feature>
<feature type="strand" evidence="27">
    <location>
        <begin position="580"/>
        <end position="582"/>
    </location>
</feature>
<feature type="strand" evidence="27">
    <location>
        <begin position="585"/>
        <end position="587"/>
    </location>
</feature>
<feature type="strand" evidence="27">
    <location>
        <begin position="589"/>
        <end position="591"/>
    </location>
</feature>
<feature type="helix" evidence="27">
    <location>
        <begin position="595"/>
        <end position="607"/>
    </location>
</feature>
<feature type="strand" evidence="27">
    <location>
        <begin position="610"/>
        <end position="614"/>
    </location>
</feature>
<feature type="strand" evidence="27">
    <location>
        <begin position="616"/>
        <end position="619"/>
    </location>
</feature>
<feature type="strand" evidence="27">
    <location>
        <begin position="621"/>
        <end position="624"/>
    </location>
</feature>
<feature type="strand" evidence="27">
    <location>
        <begin position="630"/>
        <end position="638"/>
    </location>
</feature>
<feature type="turn" evidence="27">
    <location>
        <begin position="642"/>
        <end position="644"/>
    </location>
</feature>
<feature type="strand" evidence="27">
    <location>
        <begin position="646"/>
        <end position="656"/>
    </location>
</feature>
<feature type="strand" evidence="27">
    <location>
        <begin position="659"/>
        <end position="665"/>
    </location>
</feature>
<feature type="helix" evidence="27">
    <location>
        <begin position="667"/>
        <end position="670"/>
    </location>
</feature>
<feature type="turn" evidence="27">
    <location>
        <begin position="671"/>
        <end position="673"/>
    </location>
</feature>
<feature type="helix" evidence="27">
    <location>
        <begin position="680"/>
        <end position="688"/>
    </location>
</feature>
<feature type="turn" evidence="27">
    <location>
        <begin position="689"/>
        <end position="691"/>
    </location>
</feature>
<feature type="strand" evidence="27">
    <location>
        <begin position="693"/>
        <end position="702"/>
    </location>
</feature>
<feature type="helix" evidence="27">
    <location>
        <begin position="704"/>
        <end position="711"/>
    </location>
</feature>
<feature type="turn" evidence="27">
    <location>
        <begin position="734"/>
        <end position="736"/>
    </location>
</feature>
<feature type="strand" evidence="27">
    <location>
        <begin position="741"/>
        <end position="752"/>
    </location>
</feature>
<feature type="helix" evidence="27">
    <location>
        <begin position="757"/>
        <end position="765"/>
    </location>
</feature>
<feature type="strand" evidence="27">
    <location>
        <begin position="769"/>
        <end position="773"/>
    </location>
</feature>
<feature type="helix" evidence="27">
    <location>
        <begin position="778"/>
        <end position="787"/>
    </location>
</feature>
<feature type="strand" evidence="27">
    <location>
        <begin position="823"/>
        <end position="826"/>
    </location>
</feature>
<feature type="helix" evidence="27">
    <location>
        <begin position="828"/>
        <end position="837"/>
    </location>
</feature>
<feature type="helix" evidence="27">
    <location>
        <begin position="839"/>
        <end position="846"/>
    </location>
</feature>
<feature type="strand" evidence="27">
    <location>
        <begin position="848"/>
        <end position="850"/>
    </location>
</feature>
<feature type="strand" evidence="27">
    <location>
        <begin position="852"/>
        <end position="854"/>
    </location>
</feature>
<feature type="helix" evidence="27">
    <location>
        <begin position="859"/>
        <end position="872"/>
    </location>
</feature>
<feature type="strand" evidence="27">
    <location>
        <begin position="877"/>
        <end position="881"/>
    </location>
</feature>
<feature type="helix" evidence="27">
    <location>
        <begin position="884"/>
        <end position="886"/>
    </location>
</feature>
<feature type="helix" evidence="27">
    <location>
        <begin position="887"/>
        <end position="891"/>
    </location>
</feature>
<feature type="strand" evidence="27">
    <location>
        <begin position="893"/>
        <end position="899"/>
    </location>
</feature>
<feature type="strand" evidence="27">
    <location>
        <begin position="901"/>
        <end position="903"/>
    </location>
</feature>
<feature type="helix" evidence="27">
    <location>
        <begin position="906"/>
        <end position="910"/>
    </location>
</feature>
<feature type="strand" evidence="27">
    <location>
        <begin position="911"/>
        <end position="918"/>
    </location>
</feature>
<feature type="helix" evidence="27">
    <location>
        <begin position="920"/>
        <end position="926"/>
    </location>
</feature>
<feature type="helix" evidence="27">
    <location>
        <begin position="928"/>
        <end position="960"/>
    </location>
</feature>
<feature type="strand" evidence="27">
    <location>
        <begin position="961"/>
        <end position="963"/>
    </location>
</feature>
<feature type="turn" evidence="26">
    <location>
        <begin position="966"/>
        <end position="968"/>
    </location>
</feature>
<feature type="helix" evidence="27">
    <location>
        <begin position="972"/>
        <end position="978"/>
    </location>
</feature>
<feature type="turn" evidence="27">
    <location>
        <begin position="979"/>
        <end position="982"/>
    </location>
</feature>
<feature type="helix" evidence="27">
    <location>
        <begin position="983"/>
        <end position="989"/>
    </location>
</feature>
<feature type="helix" evidence="27">
    <location>
        <begin position="997"/>
        <end position="999"/>
    </location>
</feature>
<feature type="turn" evidence="27">
    <location>
        <begin position="1000"/>
        <end position="1002"/>
    </location>
</feature>
<feature type="helix" evidence="27">
    <location>
        <begin position="1005"/>
        <end position="1010"/>
    </location>
</feature>
<feature type="strand" evidence="27">
    <location>
        <begin position="1015"/>
        <end position="1017"/>
    </location>
</feature>
<feature type="helix" evidence="27">
    <location>
        <begin position="1018"/>
        <end position="1043"/>
    </location>
</feature>
<feature type="strand" evidence="27">
    <location>
        <begin position="1046"/>
        <end position="1049"/>
    </location>
</feature>
<feature type="helix" evidence="27">
    <location>
        <begin position="1050"/>
        <end position="1071"/>
    </location>
</feature>
<feature type="turn" evidence="27">
    <location>
        <begin position="1078"/>
        <end position="1080"/>
    </location>
</feature>
<feature type="helix" evidence="27">
    <location>
        <begin position="1081"/>
        <end position="1092"/>
    </location>
</feature>
<feature type="turn" evidence="27">
    <location>
        <begin position="1096"/>
        <end position="1099"/>
    </location>
</feature>
<feature type="helix" evidence="27">
    <location>
        <begin position="1110"/>
        <end position="1137"/>
    </location>
</feature>
<evidence type="ECO:0000250" key="1">
    <source>
        <dbReference type="UniProtKB" id="P04191"/>
    </source>
</evidence>
<evidence type="ECO:0000250" key="2">
    <source>
        <dbReference type="UniProtKB" id="P32660"/>
    </source>
</evidence>
<evidence type="ECO:0000250" key="3">
    <source>
        <dbReference type="UniProtKB" id="P39524"/>
    </source>
</evidence>
<evidence type="ECO:0000250" key="4">
    <source>
        <dbReference type="UniProtKB" id="Q8NB49"/>
    </source>
</evidence>
<evidence type="ECO:0000250" key="5">
    <source>
        <dbReference type="UniProtKB" id="Q9Y2Q0"/>
    </source>
</evidence>
<evidence type="ECO:0000255" key="6"/>
<evidence type="ECO:0000256" key="7">
    <source>
        <dbReference type="SAM" id="MobiDB-lite"/>
    </source>
</evidence>
<evidence type="ECO:0000269" key="8">
    <source>
    </source>
</evidence>
<evidence type="ECO:0000269" key="9">
    <source>
    </source>
</evidence>
<evidence type="ECO:0000269" key="10">
    <source>
    </source>
</evidence>
<evidence type="ECO:0000269" key="11">
    <source>
    </source>
</evidence>
<evidence type="ECO:0000269" key="12">
    <source>
    </source>
</evidence>
<evidence type="ECO:0000269" key="13">
    <source>
    </source>
</evidence>
<evidence type="ECO:0000269" key="14">
    <source>
    </source>
</evidence>
<evidence type="ECO:0000269" key="15">
    <source>
    </source>
</evidence>
<evidence type="ECO:0000303" key="16">
    <source>
    </source>
</evidence>
<evidence type="ECO:0000305" key="17"/>
<evidence type="ECO:0000305" key="18">
    <source>
    </source>
</evidence>
<evidence type="ECO:0000312" key="19">
    <source>
        <dbReference type="SGD" id="S000001310"/>
    </source>
</evidence>
<evidence type="ECO:0007744" key="20">
    <source>
        <dbReference type="PDB" id="7RD6"/>
    </source>
</evidence>
<evidence type="ECO:0007744" key="21">
    <source>
        <dbReference type="PDB" id="7RD7"/>
    </source>
</evidence>
<evidence type="ECO:0007744" key="22">
    <source>
        <dbReference type="PDB" id="7RD8"/>
    </source>
</evidence>
<evidence type="ECO:0007744" key="23">
    <source>
    </source>
</evidence>
<evidence type="ECO:0007744" key="24">
    <source>
    </source>
</evidence>
<evidence type="ECO:0007744" key="25">
    <source>
    </source>
</evidence>
<evidence type="ECO:0007829" key="26">
    <source>
        <dbReference type="PDB" id="7RD6"/>
    </source>
</evidence>
<evidence type="ECO:0007829" key="27">
    <source>
        <dbReference type="PDB" id="7RD7"/>
    </source>
</evidence>
<reference key="1">
    <citation type="journal article" date="1997" name="Nature">
        <title>The nucleotide sequence of Saccharomyces cerevisiae chromosome IX.</title>
        <authorList>
            <person name="Churcher C.M."/>
            <person name="Bowman S."/>
            <person name="Badcock K."/>
            <person name="Bankier A.T."/>
            <person name="Brown D."/>
            <person name="Chillingworth T."/>
            <person name="Connor R."/>
            <person name="Devlin K."/>
            <person name="Gentles S."/>
            <person name="Hamlin N."/>
            <person name="Harris D.E."/>
            <person name="Horsnell T."/>
            <person name="Hunt S."/>
            <person name="Jagels K."/>
            <person name="Jones M."/>
            <person name="Lye G."/>
            <person name="Moule S."/>
            <person name="Odell C."/>
            <person name="Pearson D."/>
            <person name="Rajandream M.A."/>
            <person name="Rice P."/>
            <person name="Rowley N."/>
            <person name="Skelton J."/>
            <person name="Smith V."/>
            <person name="Walsh S.V."/>
            <person name="Whitehead S."/>
            <person name="Barrell B.G."/>
        </authorList>
    </citation>
    <scope>NUCLEOTIDE SEQUENCE [LARGE SCALE GENOMIC DNA]</scope>
    <source>
        <strain>ATCC 204508 / S288c</strain>
    </source>
</reference>
<reference key="2">
    <citation type="journal article" date="2014" name="G3 (Bethesda)">
        <title>The reference genome sequence of Saccharomyces cerevisiae: Then and now.</title>
        <authorList>
            <person name="Engel S.R."/>
            <person name="Dietrich F.S."/>
            <person name="Fisk D.G."/>
            <person name="Binkley G."/>
            <person name="Balakrishnan R."/>
            <person name="Costanzo M.C."/>
            <person name="Dwight S.S."/>
            <person name="Hitz B.C."/>
            <person name="Karra K."/>
            <person name="Nash R.S."/>
            <person name="Weng S."/>
            <person name="Wong E.D."/>
            <person name="Lloyd P."/>
            <person name="Skrzypek M.S."/>
            <person name="Miyasato S.R."/>
            <person name="Simison M."/>
            <person name="Cherry J.M."/>
        </authorList>
    </citation>
    <scope>GENOME REANNOTATION</scope>
    <source>
        <strain>ATCC 204508 / S288c</strain>
    </source>
</reference>
<reference key="3">
    <citation type="journal article" date="2003" name="Mol. Biol. Cell">
        <title>Drs2p-related P-type ATPases Dnf1p and Dnf2p are required for phospholipid translocation across the yeast plasma membrane and serve a role in endocytosis.</title>
        <authorList>
            <person name="Pomorski T."/>
            <person name="Lombardi R."/>
            <person name="Riezman H."/>
            <person name="Devaux P.F."/>
            <person name="van Meer G."/>
            <person name="Holthuis J.C."/>
        </authorList>
    </citation>
    <scope>SUBCELLULAR LOCATION</scope>
</reference>
<reference key="4">
    <citation type="journal article" date="2003" name="Mol. Biol. Cell">
        <title>Requirement for neo1p in retrograde transport from the Golgi complex to the endoplasmic reticulum.</title>
        <authorList>
            <person name="Hua Z."/>
            <person name="Graham T.R."/>
        </authorList>
    </citation>
    <scope>FUNCTION</scope>
    <scope>SUBCELLULAR LOCATION</scope>
</reference>
<reference key="5">
    <citation type="journal article" date="2004" name="Mol. Cell. Biol.">
        <title>Molecular interactions of yeast Neo1p, an essential member of the Drs2 family of aminophospholipid translocases, and its role in membrane trafficking within the endomembrane system.</title>
        <authorList>
            <person name="Wicky S."/>
            <person name="Schwarz H."/>
            <person name="Singer-Krueger B."/>
        </authorList>
    </citation>
    <scope>FUNCTION</scope>
    <scope>INTERACTION WITH MON2</scope>
    <scope>SUBCELLULAR LOCATION</scope>
</reference>
<reference key="6">
    <citation type="journal article" date="2006" name="Proc. Natl. Acad. Sci. U.S.A.">
        <title>A global topology map of the Saccharomyces cerevisiae membrane proteome.</title>
        <authorList>
            <person name="Kim H."/>
            <person name="Melen K."/>
            <person name="Oesterberg M."/>
            <person name="von Heijne G."/>
        </authorList>
    </citation>
    <scope>TOPOLOGY [LARGE SCALE ANALYSIS]</scope>
    <source>
        <strain>ATCC 208353 / W303-1A</strain>
    </source>
</reference>
<reference key="7">
    <citation type="journal article" date="2007" name="J. Proteome Res.">
        <title>Large-scale phosphorylation analysis of alpha-factor-arrested Saccharomyces cerevisiae.</title>
        <authorList>
            <person name="Li X."/>
            <person name="Gerber S.A."/>
            <person name="Rudner A.D."/>
            <person name="Beausoleil S.A."/>
            <person name="Haas W."/>
            <person name="Villen J."/>
            <person name="Elias J.E."/>
            <person name="Gygi S.P."/>
        </authorList>
    </citation>
    <scope>PHOSPHORYLATION [LARGE SCALE ANALYSIS] AT SER-102</scope>
    <scope>IDENTIFICATION BY MASS SPECTROMETRY [LARGE SCALE ANALYSIS]</scope>
    <source>
        <strain>ADR376</strain>
    </source>
</reference>
<reference key="8">
    <citation type="journal article" date="2008" name="Mol. Cell. Proteomics">
        <title>A multidimensional chromatography technology for in-depth phosphoproteome analysis.</title>
        <authorList>
            <person name="Albuquerque C.P."/>
            <person name="Smolka M.B."/>
            <person name="Payne S.H."/>
            <person name="Bafna V."/>
            <person name="Eng J."/>
            <person name="Zhou H."/>
        </authorList>
    </citation>
    <scope>PHOSPHORYLATION [LARGE SCALE ANALYSIS] AT SER-102 AND SER-551</scope>
    <scope>IDENTIFICATION BY MASS SPECTROMETRY [LARGE SCALE ANALYSIS]</scope>
</reference>
<reference key="9">
    <citation type="journal article" date="2009" name="Science">
        <title>Global analysis of Cdk1 substrate phosphorylation sites provides insights into evolution.</title>
        <authorList>
            <person name="Holt L.J."/>
            <person name="Tuch B.B."/>
            <person name="Villen J."/>
            <person name="Johnson A.D."/>
            <person name="Gygi S.P."/>
            <person name="Morgan D.O."/>
        </authorList>
    </citation>
    <scope>PHOSPHORYLATION [LARGE SCALE ANALYSIS] AT SER-102</scope>
    <scope>IDENTIFICATION BY MASS SPECTROMETRY [LARGE SCALE ANALYSIS]</scope>
</reference>
<reference key="10">
    <citation type="journal article" date="2016" name="J. Biol. Chem.">
        <title>The Essential Neo1 Protein from Budding Yeast Plays a Role in Establishing Aminophospholipid Asymmetry of the Plasma Membrane.</title>
        <authorList>
            <person name="Takar M."/>
            <person name="Wu Y."/>
            <person name="Graham T.R."/>
        </authorList>
    </citation>
    <scope>FUNCTION</scope>
    <scope>DISRUPTION PHENOTYPE</scope>
    <scope>MUTAGENESIS OF ASP-503</scope>
</reference>
<reference key="11">
    <citation type="journal article" date="2017" name="Mol. Biol. Cell">
        <title>Quantitative high-content imaging identifies novel regulators of Neo1 trafficking at endosomes.</title>
        <authorList>
            <person name="Dalton L.E."/>
            <person name="Bean B.D.M."/>
            <person name="Davey M."/>
            <person name="Conibear E."/>
        </authorList>
    </citation>
    <scope>FUNCTION</scope>
    <scope>DISRUPTION PHENOTYPE</scope>
    <scope>MUTAGENESIS OF 65-PHE--MET-67</scope>
</reference>
<reference key="12">
    <citation type="journal article" date="2019" name="J. Lipid Res.">
        <title>The PQ-loop protein Any1 segregates Drs2 and Neo1 functions required for viability and plasma membrane phospholipid asymmetry.</title>
        <authorList>
            <person name="Takar M."/>
            <person name="Huang Y."/>
            <person name="Graham T.R."/>
        </authorList>
    </citation>
    <scope>FUNCTION</scope>
    <scope>INTERACTION WITH ANY1</scope>
</reference>
<reference key="13">
    <citation type="journal article" date="2020" name="Biochim. Biophys. Acta">
        <title>Conserved mechanism of phospholipid substrate recognition by the P4-ATPase Neo1 from Saccharomyces cerevisiae.</title>
        <authorList>
            <person name="Huang Y."/>
            <person name="Takar M."/>
            <person name="Best J.T."/>
            <person name="Graham T.R."/>
        </authorList>
    </citation>
    <scope>INTERACTION WITH ANY1</scope>
    <scope>SUBCELLULAR LOCATION</scope>
    <scope>DISRUPTION PHENOTYPE</scope>
    <scope>MUTAGENESIS OF GLN-209; TYR-222; PHE-228; GLU-237; SER-452; VAL-457 AND ASP-503</scope>
</reference>
<reference evidence="20 21 22" key="14">
    <citation type="journal article" date="2021" name="Nat. Commun.">
        <title>Structural basis of the P4B ATPase lipid flippase activity.</title>
        <authorList>
            <person name="Bai L."/>
            <person name="Jain B.K."/>
            <person name="You Q."/>
            <person name="Duan H.D."/>
            <person name="Takar M."/>
            <person name="Graham T.R."/>
            <person name="Li H."/>
        </authorList>
    </citation>
    <scope>STRUCTURE BY ELECTRON MICROSCOPY (3.08 ANGSTROMS) IN COMPLEX WITH MAGNESIUM</scope>
    <scope>FUNCTION</scope>
    <scope>CATALYTIC ACTIVITY</scope>
    <scope>COFACTOR</scope>
    <scope>BIOPHYSICOCHEMICAL PROPERTIES</scope>
    <scope>SUBUNIT</scope>
    <scope>SUBCELLULAR LOCATION</scope>
    <scope>DISRUPTION PHENOTYPE</scope>
    <scope>MUTAGENESIS OF GLN-193; GLN-209; SER-221; GLU-237; ARG-247; SER-452; THR-453; PRO-456 AND SER-488</scope>
</reference>
<keyword id="KW-0002">3D-structure</keyword>
<keyword id="KW-0067">ATP-binding</keyword>
<keyword id="KW-0967">Endosome</keyword>
<keyword id="KW-0333">Golgi apparatus</keyword>
<keyword id="KW-0445">Lipid transport</keyword>
<keyword id="KW-0460">Magnesium</keyword>
<keyword id="KW-0472">Membrane</keyword>
<keyword id="KW-0479">Metal-binding</keyword>
<keyword id="KW-0547">Nucleotide-binding</keyword>
<keyword id="KW-0597">Phosphoprotein</keyword>
<keyword id="KW-0653">Protein transport</keyword>
<keyword id="KW-1185">Reference proteome</keyword>
<keyword id="KW-1278">Translocase</keyword>
<keyword id="KW-0812">Transmembrane</keyword>
<keyword id="KW-1133">Transmembrane helix</keyword>
<keyword id="KW-0813">Transport</keyword>
<gene>
    <name evidence="16" type="primary">NEO1</name>
    <name evidence="19" type="ordered locus">YIL048W</name>
</gene>
<comment type="function">
    <text evidence="9 10 11 12 13 15">Flippase that catalyzes the hydrolysis of ATP coupled to the transport of lysophosphatidylserine, phosphatidylethanolamine, and phosphatidylserine from the lumenal to the cytosolic leaflet of the Golgi apparatus membrane and ensures the maintenance of asymmetric distribution of phospholipids (PubMed:27235400, PubMed:30824614, PubMed:34645814). Does not appear to transport phosphatidylcholine or sphingomyelin (PubMed:34645814). May be involved in recycling from endosomes by driving the formation of SNX3-dependent recycling tubules (PubMed:28404745). Required for COPI retrograde transport from the Golgi to the endoplasmic reticulum, Golgi-endosome trafficking, and Golgi-dependent protein glycosylation (PubMed:12960419, PubMed:15314152).</text>
</comment>
<comment type="catalytic activity">
    <reaction evidence="18">
        <text>ATP + H2O + phospholipidSide 1 = ADP + phosphate + phospholipidSide 2.</text>
        <dbReference type="EC" id="7.6.2.1"/>
    </reaction>
</comment>
<comment type="catalytic activity">
    <reaction evidence="18">
        <text>a 1,2-diacyl-sn-glycero-3-phospho-L-serine(out) + ATP + H2O = a 1,2-diacyl-sn-glycero-3-phospho-L-serine(in) + ADP + phosphate + H(+)</text>
        <dbReference type="Rhea" id="RHEA:38567"/>
        <dbReference type="ChEBI" id="CHEBI:15377"/>
        <dbReference type="ChEBI" id="CHEBI:15378"/>
        <dbReference type="ChEBI" id="CHEBI:30616"/>
        <dbReference type="ChEBI" id="CHEBI:43474"/>
        <dbReference type="ChEBI" id="CHEBI:57262"/>
        <dbReference type="ChEBI" id="CHEBI:456216"/>
    </reaction>
    <physiologicalReaction direction="left-to-right" evidence="18">
        <dbReference type="Rhea" id="RHEA:38568"/>
    </physiologicalReaction>
</comment>
<comment type="catalytic activity">
    <reaction evidence="18">
        <text>a 1,2-diacyl-sn-glycero-3-phosphoethanolamine(out) + ATP + H2O = a 1,2-diacyl-sn-glycero-3-phosphoethanolamine(in) + ADP + phosphate + H(+)</text>
        <dbReference type="Rhea" id="RHEA:66132"/>
        <dbReference type="ChEBI" id="CHEBI:15377"/>
        <dbReference type="ChEBI" id="CHEBI:15378"/>
        <dbReference type="ChEBI" id="CHEBI:30616"/>
        <dbReference type="ChEBI" id="CHEBI:43474"/>
        <dbReference type="ChEBI" id="CHEBI:64612"/>
        <dbReference type="ChEBI" id="CHEBI:456216"/>
    </reaction>
    <physiologicalReaction direction="left-to-right" evidence="18">
        <dbReference type="Rhea" id="RHEA:66133"/>
    </physiologicalReaction>
</comment>
<comment type="cofactor">
    <cofactor evidence="15">
        <name>Mg(2+)</name>
        <dbReference type="ChEBI" id="CHEBI:18420"/>
    </cofactor>
</comment>
<comment type="biophysicochemical properties">
    <kinetics>
        <KM evidence="15">97.1 uM for phosphatidylethanolamine and for ATPase activity (at 37 degrees Celsius and at pH 7.4)</KM>
        <KM evidence="15">62.9 uM for phosphatidylserine and for ATPase activity (at 37 degrees Celsius and at pH 7.4)</KM>
        <KM evidence="15">50.3 uM for lysophosphatidylserine and for ATPase activity (at 37 degrees Celsius and at pH 7.4)</KM>
        <Vmax evidence="15">0.56 nmol/min/ug enzyme for phosphatidylethanolamine and for ATPase activity (at 37 degrees Celsius and at pH 7.4)</Vmax>
        <Vmax evidence="15">0.559 nmol/min/ug enzyme for phosphatidylserine and for ATPase activity (at 37 degrees Celsius and at pH 7.4)</Vmax>
        <Vmax evidence="15">0.585 nmol/min/ug enzyme for lysophosphatidylserine and for ATPase activity (at 37 degrees Celsius and at pH 7.4)</Vmax>
    </kinetics>
</comment>
<comment type="subunit">
    <text evidence="10 13 14 15">Interacts with MON2 (PubMed:15314152). Interacts with ANY1 (PubMed:30824614, PubMed:31786280). Functions without a CDC50/LEM3 family accessory subunit (PubMed:34645814).</text>
</comment>
<comment type="interaction">
    <interactant intactId="EBI-3137">
        <id>P40527</id>
    </interactant>
    <interactant intactId="EBI-34442">
        <id>Q03921</id>
        <label>DOP1</label>
    </interactant>
    <organismsDiffer>false</organismsDiffer>
    <experiments>3</experiments>
</comment>
<comment type="subcellular location">
    <subcellularLocation>
        <location evidence="8 10 14">Endosome membrane</location>
        <topology evidence="10">Multi-pass membrane protein</topology>
    </subcellularLocation>
    <subcellularLocation>
        <location evidence="9 10 14 15">Golgi apparatus membrane</location>
        <topology evidence="10">Multi-pass membrane protein</topology>
    </subcellularLocation>
</comment>
<comment type="disruption phenotype">
    <text evidence="11 12 14 15">Inviable; simultaneous knockout of ANY1 rescues inviability.</text>
</comment>
<comment type="similarity">
    <text evidence="17">Belongs to the cation transport ATPase (P-type) (TC 3.A.3) family. Type IV subfamily.</text>
</comment>
<name>ATC7_YEAST</name>
<proteinExistence type="evidence at protein level"/>
<sequence>MPNPPSFKSHKQNLFNSNNNQHANSVDSFDLHLDDSFDAALDSLQINNNPEPLSKHNTVGDRESFEMRTVDDLDNFSNHSSDSHRKSSNTDTHPLMYDNRLSQDDNFKFTNIASSPPSSSNNIFSKALSYLKVSNTKNWSKFGSPIELSDQHIEREIHPDTTPVYDRNRYVSNELSNAKYNAVTFVPTLLYEQFKFFYNLYFLVVALSQAVPALRIGYLSSYIVPLAFVLTVTMAKEAIDDIQRRRRDRESNNELYHVITRNRSIPSKDLKVGDLIKVHKGDRIPADLVLLQSSEPSGESFIKTDQLDGETDWKLRVACPLTQNLSENDLINRISITASAPEKSIHKFLGKVTYKDSTSNPLSVDNTLWANTVLASSGFCIACVVYTGRDTRQAMNTTTAKVKTGLLELEINSISKILCACVFALSILLVAFAGFHNDDWYIDILRYLILFSTIIPVSLRVNLDLAKSVYAHQIEHDKTIPETIVRTSTIPEDLGRIEYLLSDKTGTLTQNDMQLKKIHLGTVSYTSETLDIVSDYVQSLVSSKNDSLNNSKVALSTTRKDMSFRVRDMILTLAICHNVTPTFEDDELTYQAASPDEIAIVKFTESVGLSLFKRDRHSISLLHEHSGKTLNYEILQVFPFNSDSKRMGIIVRDEQLDEYWFMQKGADTVMSKIVESNDWLEEETGNMAREGLRTLVIGRKKLNKKIYEQFQKEYNDASLSMLNRDQQMSQVITKYLEHDLELLGLTGVEDKLQKDVKSSIELLRNAGIKIWMLTGDKVETARCVSISAKLISRGQYVHTITKVTRPEGAFNQLEYLKINRNACLLIDGESLGMFLKHYEQEFFDVVVHLPTVIACRCTPQQKADVALVIRKMTGKRVCCIGDGGNDVSMIQCADVGVGIVGKEGKQASLAADFSITQFCHLTELLLWHGRNSYKRSAKLAQFVMHRGLIIAICQAVYSICSLFEPIALYQGWLMVGYATCYTMAPVFSLTLDHDIEESLTKIYPELYKELTEGKSLSYKTFFVWVLLSLFQGSVIQLFSQAFTSLLDTDFTRMVAISFTALVVNELIMVALEIYTWNKTMLVTEIATLLFYIVSVPFLGDYFDLGYMTTVNYYAGLLVILLISIFPVWTAKAIYRRLHPPSYAKVQEFATP</sequence>
<organism>
    <name type="scientific">Saccharomyces cerevisiae (strain ATCC 204508 / S288c)</name>
    <name type="common">Baker's yeast</name>
    <dbReference type="NCBI Taxonomy" id="559292"/>
    <lineage>
        <taxon>Eukaryota</taxon>
        <taxon>Fungi</taxon>
        <taxon>Dikarya</taxon>
        <taxon>Ascomycota</taxon>
        <taxon>Saccharomycotina</taxon>
        <taxon>Saccharomycetes</taxon>
        <taxon>Saccharomycetales</taxon>
        <taxon>Saccharomycetaceae</taxon>
        <taxon>Saccharomyces</taxon>
    </lineage>
</organism>
<accession>P40527</accession>
<accession>D6VVN3</accession>
<protein>
    <recommendedName>
        <fullName>Phospholipid-transporting ATPase NEO1</fullName>
        <ecNumber evidence="18">7.6.2.1</ecNumber>
    </recommendedName>
</protein>